<geneLocation type="chloroplast"/>
<organism>
    <name type="scientific">Zea mays</name>
    <name type="common">Maize</name>
    <dbReference type="NCBI Taxonomy" id="4577"/>
    <lineage>
        <taxon>Eukaryota</taxon>
        <taxon>Viridiplantae</taxon>
        <taxon>Streptophyta</taxon>
        <taxon>Embryophyta</taxon>
        <taxon>Tracheophyta</taxon>
        <taxon>Spermatophyta</taxon>
        <taxon>Magnoliopsida</taxon>
        <taxon>Liliopsida</taxon>
        <taxon>Poales</taxon>
        <taxon>Poaceae</taxon>
        <taxon>PACMAD clade</taxon>
        <taxon>Panicoideae</taxon>
        <taxon>Andropogonodae</taxon>
        <taxon>Andropogoneae</taxon>
        <taxon>Tripsacinae</taxon>
        <taxon>Zea</taxon>
    </lineage>
</organism>
<name>RK23_MAIZE</name>
<comment type="function">
    <text evidence="1">Binds to 23S rRNA.</text>
</comment>
<comment type="subunit">
    <text evidence="1">Part of the 50S ribosomal subunit.</text>
</comment>
<comment type="subcellular location">
    <subcellularLocation>
        <location>Plastid</location>
        <location>Chloroplast</location>
    </subcellularLocation>
</comment>
<comment type="similarity">
    <text evidence="2">Belongs to the universal ribosomal protein uL23 family.</text>
</comment>
<reference key="1">
    <citation type="journal article" date="1988" name="Nucleic Acids Res.">
        <title>The sequence of the maize plastid encoded rpl 23 locus.</title>
        <authorList>
            <person name="McLaughlin W.E."/>
            <person name="Larrinua I.M."/>
        </authorList>
    </citation>
    <scope>NUCLEOTIDE SEQUENCE [GENOMIC DNA]</scope>
</reference>
<reference key="2">
    <citation type="journal article" date="1995" name="J. Mol. Biol.">
        <title>Complete sequence of the maize chloroplast genome: gene content, hotspots of divergence and fine tuning of genetic information by transcript editing.</title>
        <authorList>
            <person name="Maier R.M."/>
            <person name="Neckermann K."/>
            <person name="Igloi G.L."/>
            <person name="Koessel H."/>
        </authorList>
    </citation>
    <scope>NUCLEOTIDE SEQUENCE [LARGE SCALE GENOMIC DNA]</scope>
    <source>
        <strain>cv. B73</strain>
    </source>
</reference>
<reference key="3">
    <citation type="journal article" date="1991" name="Nature">
        <title>Editing of a chloroplast mRNA by creation of an initiation codon.</title>
        <authorList>
            <person name="Hoch B."/>
            <person name="Maier R.M."/>
            <person name="Appel K."/>
            <person name="Igloi G.L."/>
            <person name="Koessel H."/>
        </authorList>
    </citation>
    <scope>NUCLEOTIDE SEQUENCE [MRNA] OF 81-93</scope>
</reference>
<proteinExistence type="inferred from homology"/>
<dbReference type="EMBL" id="X07864">
    <property type="protein sequence ID" value="CAA30712.1"/>
    <property type="molecule type" value="Genomic_DNA"/>
</dbReference>
<dbReference type="EMBL" id="X86563">
    <property type="protein sequence ID" value="CAA60330.1"/>
    <property type="molecule type" value="Genomic_DNA"/>
</dbReference>
<dbReference type="EMBL" id="X86563">
    <property type="protein sequence ID" value="CAA60370.1"/>
    <property type="molecule type" value="Genomic_DNA"/>
</dbReference>
<dbReference type="EMBL" id="X62070">
    <property type="protein sequence ID" value="CAA43984.1"/>
    <property type="molecule type" value="mRNA"/>
</dbReference>
<dbReference type="PIR" id="S01396">
    <property type="entry name" value="R5ZM23"/>
</dbReference>
<dbReference type="SMR" id="P09387"/>
<dbReference type="FunCoup" id="P09387">
    <property type="interactions" value="73"/>
</dbReference>
<dbReference type="STRING" id="4577.P09387"/>
<dbReference type="KEGG" id="zma:845219"/>
<dbReference type="KEGG" id="zma:845220"/>
<dbReference type="MaizeGDB" id="66085"/>
<dbReference type="InParanoid" id="P09387"/>
<dbReference type="OrthoDB" id="563989at2759"/>
<dbReference type="Proteomes" id="UP000007305">
    <property type="component" value="Chloroplast"/>
</dbReference>
<dbReference type="GO" id="GO:0009507">
    <property type="term" value="C:chloroplast"/>
    <property type="evidence" value="ECO:0007669"/>
    <property type="project" value="UniProtKB-SubCell"/>
</dbReference>
<dbReference type="GO" id="GO:0022625">
    <property type="term" value="C:cytosolic large ribosomal subunit"/>
    <property type="evidence" value="ECO:0000318"/>
    <property type="project" value="GO_Central"/>
</dbReference>
<dbReference type="GO" id="GO:0019843">
    <property type="term" value="F:rRNA binding"/>
    <property type="evidence" value="ECO:0007669"/>
    <property type="project" value="UniProtKB-UniRule"/>
</dbReference>
<dbReference type="GO" id="GO:0003735">
    <property type="term" value="F:structural constituent of ribosome"/>
    <property type="evidence" value="ECO:0000318"/>
    <property type="project" value="GO_Central"/>
</dbReference>
<dbReference type="GO" id="GO:0006412">
    <property type="term" value="P:translation"/>
    <property type="evidence" value="ECO:0007669"/>
    <property type="project" value="UniProtKB-UniRule"/>
</dbReference>
<dbReference type="FunFam" id="3.30.70.330:FF:000002">
    <property type="entry name" value="50S ribosomal protein L23, chloroplastic"/>
    <property type="match status" value="1"/>
</dbReference>
<dbReference type="Gene3D" id="3.30.70.330">
    <property type="match status" value="1"/>
</dbReference>
<dbReference type="HAMAP" id="MF_01369_B">
    <property type="entry name" value="Ribosomal_uL23_B"/>
    <property type="match status" value="1"/>
</dbReference>
<dbReference type="InterPro" id="IPR012677">
    <property type="entry name" value="Nucleotide-bd_a/b_plait_sf"/>
</dbReference>
<dbReference type="InterPro" id="IPR013025">
    <property type="entry name" value="Ribosomal_uL23-like"/>
</dbReference>
<dbReference type="InterPro" id="IPR012678">
    <property type="entry name" value="Ribosomal_uL23/eL15/eS24_sf"/>
</dbReference>
<dbReference type="InterPro" id="IPR001014">
    <property type="entry name" value="Ribosomal_uL23_CS"/>
</dbReference>
<dbReference type="PANTHER" id="PTHR11620">
    <property type="entry name" value="60S RIBOSOMAL PROTEIN L23A"/>
    <property type="match status" value="1"/>
</dbReference>
<dbReference type="Pfam" id="PF00276">
    <property type="entry name" value="Ribosomal_L23"/>
    <property type="match status" value="1"/>
</dbReference>
<dbReference type="SUPFAM" id="SSF54189">
    <property type="entry name" value="Ribosomal proteins S24e, L23 and L15e"/>
    <property type="match status" value="1"/>
</dbReference>
<dbReference type="PROSITE" id="PS00050">
    <property type="entry name" value="RIBOSOMAL_L23"/>
    <property type="match status" value="1"/>
</dbReference>
<accession>P09387</accession>
<evidence type="ECO:0000250" key="1"/>
<evidence type="ECO:0000305" key="2"/>
<feature type="chain" id="PRO_0000129453" description="Large ribosomal subunit protein uL23cz/uL23cy">
    <location>
        <begin position="1"/>
        <end position="93"/>
    </location>
</feature>
<sequence>MDGIKYAVFTEKSLRLLGKNQYTFNVESGFTKTEIKHWVELFFGVKVVAVNSHRLPGKGRRMGPILGHTMHYRRMIITLQPGYSIPLLDRETN</sequence>
<protein>
    <recommendedName>
        <fullName evidence="2">Large ribosomal subunit protein uL23cz/uL23cy</fullName>
    </recommendedName>
    <alternativeName>
        <fullName>50S ribosomal protein L23, chloroplastic</fullName>
    </alternativeName>
</protein>
<gene>
    <name type="primary">rpl23-A</name>
</gene>
<gene>
    <name type="primary">rpl23-B</name>
</gene>
<keyword id="KW-0150">Chloroplast</keyword>
<keyword id="KW-0934">Plastid</keyword>
<keyword id="KW-1185">Reference proteome</keyword>
<keyword id="KW-0687">Ribonucleoprotein</keyword>
<keyword id="KW-0689">Ribosomal protein</keyword>
<keyword id="KW-0694">RNA-binding</keyword>
<keyword id="KW-0699">rRNA-binding</keyword>